<protein>
    <recommendedName>
        <fullName evidence="1">Large ribosomal subunit protein uL1</fullName>
    </recommendedName>
    <alternativeName>
        <fullName evidence="2">50S ribosomal protein L1</fullName>
    </alternativeName>
</protein>
<name>RL1_CERS4</name>
<feature type="chain" id="PRO_0000230632" description="Large ribosomal subunit protein uL1">
    <location>
        <begin position="1"/>
        <end position="232"/>
    </location>
</feature>
<accession>Q3J5T3</accession>
<gene>
    <name evidence="1" type="primary">rplA</name>
    <name type="ordered locus">RHOS4_02830</name>
    <name type="ORF">RSP_1702</name>
</gene>
<organism>
    <name type="scientific">Cereibacter sphaeroides (strain ATCC 17023 / DSM 158 / JCM 6121 / CCUG 31486 / LMG 2827 / NBRC 12203 / NCIMB 8253 / ATH 2.4.1.)</name>
    <name type="common">Rhodobacter sphaeroides</name>
    <dbReference type="NCBI Taxonomy" id="272943"/>
    <lineage>
        <taxon>Bacteria</taxon>
        <taxon>Pseudomonadati</taxon>
        <taxon>Pseudomonadota</taxon>
        <taxon>Alphaproteobacteria</taxon>
        <taxon>Rhodobacterales</taxon>
        <taxon>Paracoccaceae</taxon>
        <taxon>Cereibacter</taxon>
    </lineage>
</organism>
<comment type="function">
    <text evidence="1">Binds directly to 23S rRNA. The L1 stalk is quite mobile in the ribosome, and is involved in E site tRNA release.</text>
</comment>
<comment type="function">
    <text evidence="1">Protein L1 is also a translational repressor protein, it controls the translation of the L11 operon by binding to its mRNA.</text>
</comment>
<comment type="subunit">
    <text evidence="1">Part of the 50S ribosomal subunit.</text>
</comment>
<comment type="similarity">
    <text evidence="1">Belongs to the universal ribosomal protein uL1 family.</text>
</comment>
<reference key="1">
    <citation type="submission" date="2005-09" db="EMBL/GenBank/DDBJ databases">
        <title>Complete sequence of chromosome 1 of Rhodobacter sphaeroides 2.4.1.</title>
        <authorList>
            <person name="Copeland A."/>
            <person name="Lucas S."/>
            <person name="Lapidus A."/>
            <person name="Barry K."/>
            <person name="Detter J.C."/>
            <person name="Glavina T."/>
            <person name="Hammon N."/>
            <person name="Israni S."/>
            <person name="Pitluck S."/>
            <person name="Richardson P."/>
            <person name="Mackenzie C."/>
            <person name="Choudhary M."/>
            <person name="Larimer F."/>
            <person name="Hauser L.J."/>
            <person name="Land M."/>
            <person name="Donohue T.J."/>
            <person name="Kaplan S."/>
        </authorList>
    </citation>
    <scope>NUCLEOTIDE SEQUENCE [LARGE SCALE GENOMIC DNA]</scope>
    <source>
        <strain>ATCC 17023 / DSM 158 / JCM 6121 / CCUG 31486 / LMG 2827 / NBRC 12203 / NCIMB 8253 / ATH 2.4.1.</strain>
    </source>
</reference>
<proteinExistence type="inferred from homology"/>
<dbReference type="EMBL" id="CP000143">
    <property type="protein sequence ID" value="ABA77851.1"/>
    <property type="molecule type" value="Genomic_DNA"/>
</dbReference>
<dbReference type="RefSeq" id="WP_002722474.1">
    <property type="nucleotide sequence ID" value="NZ_CP030271.1"/>
</dbReference>
<dbReference type="RefSeq" id="YP_351752.1">
    <property type="nucleotide sequence ID" value="NC_007493.2"/>
</dbReference>
<dbReference type="SMR" id="Q3J5T3"/>
<dbReference type="STRING" id="272943.RSP_1702"/>
<dbReference type="EnsemblBacteria" id="ABA77851">
    <property type="protein sequence ID" value="ABA77851"/>
    <property type="gene ID" value="RSP_1702"/>
</dbReference>
<dbReference type="GeneID" id="67445489"/>
<dbReference type="KEGG" id="rsp:RSP_1702"/>
<dbReference type="PATRIC" id="fig|272943.9.peg.581"/>
<dbReference type="eggNOG" id="COG0081">
    <property type="taxonomic scope" value="Bacteria"/>
</dbReference>
<dbReference type="OrthoDB" id="9803740at2"/>
<dbReference type="PhylomeDB" id="Q3J5T3"/>
<dbReference type="Proteomes" id="UP000002703">
    <property type="component" value="Chromosome 1"/>
</dbReference>
<dbReference type="GO" id="GO:0022625">
    <property type="term" value="C:cytosolic large ribosomal subunit"/>
    <property type="evidence" value="ECO:0007669"/>
    <property type="project" value="TreeGrafter"/>
</dbReference>
<dbReference type="GO" id="GO:0019843">
    <property type="term" value="F:rRNA binding"/>
    <property type="evidence" value="ECO:0007669"/>
    <property type="project" value="UniProtKB-UniRule"/>
</dbReference>
<dbReference type="GO" id="GO:0003735">
    <property type="term" value="F:structural constituent of ribosome"/>
    <property type="evidence" value="ECO:0007669"/>
    <property type="project" value="InterPro"/>
</dbReference>
<dbReference type="GO" id="GO:0000049">
    <property type="term" value="F:tRNA binding"/>
    <property type="evidence" value="ECO:0007669"/>
    <property type="project" value="UniProtKB-KW"/>
</dbReference>
<dbReference type="GO" id="GO:0006417">
    <property type="term" value="P:regulation of translation"/>
    <property type="evidence" value="ECO:0007669"/>
    <property type="project" value="UniProtKB-KW"/>
</dbReference>
<dbReference type="GO" id="GO:0006412">
    <property type="term" value="P:translation"/>
    <property type="evidence" value="ECO:0007669"/>
    <property type="project" value="UniProtKB-UniRule"/>
</dbReference>
<dbReference type="CDD" id="cd00403">
    <property type="entry name" value="Ribosomal_L1"/>
    <property type="match status" value="1"/>
</dbReference>
<dbReference type="FunFam" id="3.40.50.790:FF:000001">
    <property type="entry name" value="50S ribosomal protein L1"/>
    <property type="match status" value="1"/>
</dbReference>
<dbReference type="Gene3D" id="3.30.190.20">
    <property type="match status" value="1"/>
</dbReference>
<dbReference type="Gene3D" id="3.40.50.790">
    <property type="match status" value="1"/>
</dbReference>
<dbReference type="HAMAP" id="MF_01318_B">
    <property type="entry name" value="Ribosomal_uL1_B"/>
    <property type="match status" value="1"/>
</dbReference>
<dbReference type="InterPro" id="IPR005878">
    <property type="entry name" value="Ribosom_uL1_bac-type"/>
</dbReference>
<dbReference type="InterPro" id="IPR002143">
    <property type="entry name" value="Ribosomal_uL1"/>
</dbReference>
<dbReference type="InterPro" id="IPR023674">
    <property type="entry name" value="Ribosomal_uL1-like"/>
</dbReference>
<dbReference type="InterPro" id="IPR028364">
    <property type="entry name" value="Ribosomal_uL1/biogenesis"/>
</dbReference>
<dbReference type="InterPro" id="IPR016095">
    <property type="entry name" value="Ribosomal_uL1_3-a/b-sand"/>
</dbReference>
<dbReference type="InterPro" id="IPR023673">
    <property type="entry name" value="Ribosomal_uL1_CS"/>
</dbReference>
<dbReference type="NCBIfam" id="TIGR01169">
    <property type="entry name" value="rplA_bact"/>
    <property type="match status" value="1"/>
</dbReference>
<dbReference type="PANTHER" id="PTHR36427">
    <property type="entry name" value="54S RIBOSOMAL PROTEIN L1, MITOCHONDRIAL"/>
    <property type="match status" value="1"/>
</dbReference>
<dbReference type="PANTHER" id="PTHR36427:SF3">
    <property type="entry name" value="LARGE RIBOSOMAL SUBUNIT PROTEIN UL1M"/>
    <property type="match status" value="1"/>
</dbReference>
<dbReference type="Pfam" id="PF00687">
    <property type="entry name" value="Ribosomal_L1"/>
    <property type="match status" value="1"/>
</dbReference>
<dbReference type="PIRSF" id="PIRSF002155">
    <property type="entry name" value="Ribosomal_L1"/>
    <property type="match status" value="1"/>
</dbReference>
<dbReference type="SUPFAM" id="SSF56808">
    <property type="entry name" value="Ribosomal protein L1"/>
    <property type="match status" value="1"/>
</dbReference>
<dbReference type="PROSITE" id="PS01199">
    <property type="entry name" value="RIBOSOMAL_L1"/>
    <property type="match status" value="1"/>
</dbReference>
<evidence type="ECO:0000255" key="1">
    <source>
        <dbReference type="HAMAP-Rule" id="MF_01318"/>
    </source>
</evidence>
<evidence type="ECO:0000305" key="2"/>
<keyword id="KW-1185">Reference proteome</keyword>
<keyword id="KW-0678">Repressor</keyword>
<keyword id="KW-0687">Ribonucleoprotein</keyword>
<keyword id="KW-0689">Ribosomal protein</keyword>
<keyword id="KW-0694">RNA-binding</keyword>
<keyword id="KW-0699">rRNA-binding</keyword>
<keyword id="KW-0810">Translation regulation</keyword>
<keyword id="KW-0820">tRNA-binding</keyword>
<sequence>MAKVGKRTRSAREAFVGKDLISVEDAVALIKQAASAKFDETLEVAMNLGVDPRHADQMVRGVVTLPNGTGKTVRVAVFARGAKADEAKAAGADIVGAEDLMETIQSGKIEFDRCIATPDMMPLVGRLGKILGPRNLMPNPKVGTVTMDVKSAVEAAKGGEVQFKVEKAGVIHAGVGKMSFEADKLAQNVRAFVDAVNRAKPAGAKGTYLKKVSLSSTMGPGVSVDLTSATSH</sequence>